<dbReference type="EC" id="6.3.2.8" evidence="1"/>
<dbReference type="EMBL" id="CP000359">
    <property type="protein sequence ID" value="ABF45926.1"/>
    <property type="molecule type" value="Genomic_DNA"/>
</dbReference>
<dbReference type="RefSeq" id="WP_011530760.1">
    <property type="nucleotide sequence ID" value="NC_008025.1"/>
</dbReference>
<dbReference type="SMR" id="Q1IXV8"/>
<dbReference type="STRING" id="319795.Dgeo_1631"/>
<dbReference type="KEGG" id="dge:Dgeo_1631"/>
<dbReference type="eggNOG" id="COG0773">
    <property type="taxonomic scope" value="Bacteria"/>
</dbReference>
<dbReference type="HOGENOM" id="CLU_028104_2_1_0"/>
<dbReference type="UniPathway" id="UPA00219"/>
<dbReference type="Proteomes" id="UP000002431">
    <property type="component" value="Chromosome"/>
</dbReference>
<dbReference type="GO" id="GO:0005737">
    <property type="term" value="C:cytoplasm"/>
    <property type="evidence" value="ECO:0007669"/>
    <property type="project" value="UniProtKB-SubCell"/>
</dbReference>
<dbReference type="GO" id="GO:0005524">
    <property type="term" value="F:ATP binding"/>
    <property type="evidence" value="ECO:0007669"/>
    <property type="project" value="UniProtKB-UniRule"/>
</dbReference>
<dbReference type="GO" id="GO:0008763">
    <property type="term" value="F:UDP-N-acetylmuramate-L-alanine ligase activity"/>
    <property type="evidence" value="ECO:0007669"/>
    <property type="project" value="UniProtKB-UniRule"/>
</dbReference>
<dbReference type="GO" id="GO:0051301">
    <property type="term" value="P:cell division"/>
    <property type="evidence" value="ECO:0007669"/>
    <property type="project" value="UniProtKB-KW"/>
</dbReference>
<dbReference type="GO" id="GO:0071555">
    <property type="term" value="P:cell wall organization"/>
    <property type="evidence" value="ECO:0007669"/>
    <property type="project" value="UniProtKB-KW"/>
</dbReference>
<dbReference type="GO" id="GO:0009252">
    <property type="term" value="P:peptidoglycan biosynthetic process"/>
    <property type="evidence" value="ECO:0007669"/>
    <property type="project" value="UniProtKB-UniRule"/>
</dbReference>
<dbReference type="GO" id="GO:0008360">
    <property type="term" value="P:regulation of cell shape"/>
    <property type="evidence" value="ECO:0007669"/>
    <property type="project" value="UniProtKB-KW"/>
</dbReference>
<dbReference type="Gene3D" id="3.90.190.20">
    <property type="entry name" value="Mur ligase, C-terminal domain"/>
    <property type="match status" value="1"/>
</dbReference>
<dbReference type="Gene3D" id="3.40.1190.10">
    <property type="entry name" value="Mur-like, catalytic domain"/>
    <property type="match status" value="1"/>
</dbReference>
<dbReference type="Gene3D" id="3.40.50.720">
    <property type="entry name" value="NAD(P)-binding Rossmann-like Domain"/>
    <property type="match status" value="1"/>
</dbReference>
<dbReference type="HAMAP" id="MF_00046">
    <property type="entry name" value="MurC"/>
    <property type="match status" value="1"/>
</dbReference>
<dbReference type="InterPro" id="IPR036565">
    <property type="entry name" value="Mur-like_cat_sf"/>
</dbReference>
<dbReference type="InterPro" id="IPR004101">
    <property type="entry name" value="Mur_ligase_C"/>
</dbReference>
<dbReference type="InterPro" id="IPR036615">
    <property type="entry name" value="Mur_ligase_C_dom_sf"/>
</dbReference>
<dbReference type="InterPro" id="IPR013221">
    <property type="entry name" value="Mur_ligase_cen"/>
</dbReference>
<dbReference type="InterPro" id="IPR000713">
    <property type="entry name" value="Mur_ligase_N"/>
</dbReference>
<dbReference type="InterPro" id="IPR050061">
    <property type="entry name" value="MurCDEF_pg_biosynth"/>
</dbReference>
<dbReference type="InterPro" id="IPR005758">
    <property type="entry name" value="UDP-N-AcMur_Ala_ligase_MurC"/>
</dbReference>
<dbReference type="NCBIfam" id="TIGR01082">
    <property type="entry name" value="murC"/>
    <property type="match status" value="1"/>
</dbReference>
<dbReference type="PANTHER" id="PTHR43445:SF3">
    <property type="entry name" value="UDP-N-ACETYLMURAMATE--L-ALANINE LIGASE"/>
    <property type="match status" value="1"/>
</dbReference>
<dbReference type="PANTHER" id="PTHR43445">
    <property type="entry name" value="UDP-N-ACETYLMURAMATE--L-ALANINE LIGASE-RELATED"/>
    <property type="match status" value="1"/>
</dbReference>
<dbReference type="Pfam" id="PF01225">
    <property type="entry name" value="Mur_ligase"/>
    <property type="match status" value="1"/>
</dbReference>
<dbReference type="Pfam" id="PF02875">
    <property type="entry name" value="Mur_ligase_C"/>
    <property type="match status" value="1"/>
</dbReference>
<dbReference type="Pfam" id="PF08245">
    <property type="entry name" value="Mur_ligase_M"/>
    <property type="match status" value="1"/>
</dbReference>
<dbReference type="SUPFAM" id="SSF51984">
    <property type="entry name" value="MurCD N-terminal domain"/>
    <property type="match status" value="1"/>
</dbReference>
<dbReference type="SUPFAM" id="SSF53623">
    <property type="entry name" value="MurD-like peptide ligases, catalytic domain"/>
    <property type="match status" value="1"/>
</dbReference>
<dbReference type="SUPFAM" id="SSF53244">
    <property type="entry name" value="MurD-like peptide ligases, peptide-binding domain"/>
    <property type="match status" value="1"/>
</dbReference>
<proteinExistence type="inferred from homology"/>
<keyword id="KW-0067">ATP-binding</keyword>
<keyword id="KW-0131">Cell cycle</keyword>
<keyword id="KW-0132">Cell division</keyword>
<keyword id="KW-0133">Cell shape</keyword>
<keyword id="KW-0961">Cell wall biogenesis/degradation</keyword>
<keyword id="KW-0963">Cytoplasm</keyword>
<keyword id="KW-0436">Ligase</keyword>
<keyword id="KW-0547">Nucleotide-binding</keyword>
<keyword id="KW-0573">Peptidoglycan synthesis</keyword>
<sequence>MTDSPPCSSDSASSVPSQLHYHLMGIGGIGVSAFARLLAARGVRVSGCDTQPSELTEQLVREGIPVALGHDPAHVTGVDVLIASEAVPKNHPELVAARGAGVEVRPRMALLDELLRAGPSVGVIGTHGKTTTTSMIAVAMQGAGLDPAAFVGGIVPEFGSNVRLGTGPFVAEVDESDRGFAVLSCETAVFTNAEDDHVGGNQATYWETVEQQHAAFARFVGQARRVLYCADWPGLDQLVTTSGERLNYGLAEGADYRAVDLRPDAEGTTFTVARRGEVLGEARVGLPGLHNVLNALAALAVTDLYGGNFQTAAAALAAFRGPGRRWQRIGELNGALIIDDYAHNATKVAAAVQAARQTGRRVRVVFQPHRYLRTQQSWPRLADALMGADEVLVLDIATASEPPIPGIHATLVSDRMAQSGHTGVRYAPDRAEVVRYLRETACADDVIVTMGAGDVWKLSRELASV</sequence>
<name>MURC_DEIGD</name>
<comment type="function">
    <text evidence="1">Cell wall formation.</text>
</comment>
<comment type="catalytic activity">
    <reaction evidence="1">
        <text>UDP-N-acetyl-alpha-D-muramate + L-alanine + ATP = UDP-N-acetyl-alpha-D-muramoyl-L-alanine + ADP + phosphate + H(+)</text>
        <dbReference type="Rhea" id="RHEA:23372"/>
        <dbReference type="ChEBI" id="CHEBI:15378"/>
        <dbReference type="ChEBI" id="CHEBI:30616"/>
        <dbReference type="ChEBI" id="CHEBI:43474"/>
        <dbReference type="ChEBI" id="CHEBI:57972"/>
        <dbReference type="ChEBI" id="CHEBI:70757"/>
        <dbReference type="ChEBI" id="CHEBI:83898"/>
        <dbReference type="ChEBI" id="CHEBI:456216"/>
        <dbReference type="EC" id="6.3.2.8"/>
    </reaction>
</comment>
<comment type="pathway">
    <text evidence="1">Cell wall biogenesis; peptidoglycan biosynthesis.</text>
</comment>
<comment type="subcellular location">
    <subcellularLocation>
        <location evidence="1">Cytoplasm</location>
    </subcellularLocation>
</comment>
<comment type="similarity">
    <text evidence="1">Belongs to the MurCDEF family.</text>
</comment>
<reference key="1">
    <citation type="submission" date="2006-04" db="EMBL/GenBank/DDBJ databases">
        <title>Complete sequence of chromosome of Deinococcus geothermalis DSM 11300.</title>
        <authorList>
            <person name="Copeland A."/>
            <person name="Lucas S."/>
            <person name="Lapidus A."/>
            <person name="Barry K."/>
            <person name="Detter J.C."/>
            <person name="Glavina del Rio T."/>
            <person name="Hammon N."/>
            <person name="Israni S."/>
            <person name="Dalin E."/>
            <person name="Tice H."/>
            <person name="Pitluck S."/>
            <person name="Brettin T."/>
            <person name="Bruce D."/>
            <person name="Han C."/>
            <person name="Tapia R."/>
            <person name="Saunders E."/>
            <person name="Gilna P."/>
            <person name="Schmutz J."/>
            <person name="Larimer F."/>
            <person name="Land M."/>
            <person name="Hauser L."/>
            <person name="Kyrpides N."/>
            <person name="Kim E."/>
            <person name="Daly M.J."/>
            <person name="Fredrickson J.K."/>
            <person name="Makarova K.S."/>
            <person name="Gaidamakova E.K."/>
            <person name="Zhai M."/>
            <person name="Richardson P."/>
        </authorList>
    </citation>
    <scope>NUCLEOTIDE SEQUENCE [LARGE SCALE GENOMIC DNA]</scope>
    <source>
        <strain>DSM 11300 / CIP 105573 / AG-3a</strain>
    </source>
</reference>
<gene>
    <name evidence="1" type="primary">murC</name>
    <name type="ordered locus">Dgeo_1631</name>
</gene>
<feature type="chain" id="PRO_0000336828" description="UDP-N-acetylmuramate--L-alanine ligase">
    <location>
        <begin position="1"/>
        <end position="465"/>
    </location>
</feature>
<feature type="binding site" evidence="1">
    <location>
        <begin position="125"/>
        <end position="131"/>
    </location>
    <ligand>
        <name>ATP</name>
        <dbReference type="ChEBI" id="CHEBI:30616"/>
    </ligand>
</feature>
<protein>
    <recommendedName>
        <fullName evidence="1">UDP-N-acetylmuramate--L-alanine ligase</fullName>
        <ecNumber evidence="1">6.3.2.8</ecNumber>
    </recommendedName>
    <alternativeName>
        <fullName evidence="1">UDP-N-acetylmuramoyl-L-alanine synthetase</fullName>
    </alternativeName>
</protein>
<accession>Q1IXV8</accession>
<organism>
    <name type="scientific">Deinococcus geothermalis (strain DSM 11300 / CIP 105573 / AG-3a)</name>
    <dbReference type="NCBI Taxonomy" id="319795"/>
    <lineage>
        <taxon>Bacteria</taxon>
        <taxon>Thermotogati</taxon>
        <taxon>Deinococcota</taxon>
        <taxon>Deinococci</taxon>
        <taxon>Deinococcales</taxon>
        <taxon>Deinococcaceae</taxon>
        <taxon>Deinococcus</taxon>
    </lineage>
</organism>
<evidence type="ECO:0000255" key="1">
    <source>
        <dbReference type="HAMAP-Rule" id="MF_00046"/>
    </source>
</evidence>